<feature type="chain" id="PRO_0000282028" description="23S rRNA (uracil(1939)-C(5))-methyltransferase RlmD">
    <location>
        <begin position="1"/>
        <end position="445"/>
    </location>
</feature>
<feature type="domain" description="TRAM" evidence="1">
    <location>
        <begin position="6"/>
        <end position="64"/>
    </location>
</feature>
<feature type="active site" description="Nucleophile" evidence="1">
    <location>
        <position position="398"/>
    </location>
</feature>
<feature type="binding site" evidence="1">
    <location>
        <position position="77"/>
    </location>
    <ligand>
        <name>[4Fe-4S] cluster</name>
        <dbReference type="ChEBI" id="CHEBI:49883"/>
    </ligand>
</feature>
<feature type="binding site" evidence="1">
    <location>
        <position position="83"/>
    </location>
    <ligand>
        <name>[4Fe-4S] cluster</name>
        <dbReference type="ChEBI" id="CHEBI:49883"/>
    </ligand>
</feature>
<feature type="binding site" evidence="1">
    <location>
        <position position="86"/>
    </location>
    <ligand>
        <name>[4Fe-4S] cluster</name>
        <dbReference type="ChEBI" id="CHEBI:49883"/>
    </ligand>
</feature>
<feature type="binding site" evidence="1">
    <location>
        <position position="165"/>
    </location>
    <ligand>
        <name>[4Fe-4S] cluster</name>
        <dbReference type="ChEBI" id="CHEBI:49883"/>
    </ligand>
</feature>
<feature type="binding site" evidence="1">
    <location>
        <position position="274"/>
    </location>
    <ligand>
        <name>S-adenosyl-L-methionine</name>
        <dbReference type="ChEBI" id="CHEBI:59789"/>
    </ligand>
</feature>
<feature type="binding site" evidence="1">
    <location>
        <position position="303"/>
    </location>
    <ligand>
        <name>S-adenosyl-L-methionine</name>
        <dbReference type="ChEBI" id="CHEBI:59789"/>
    </ligand>
</feature>
<feature type="binding site" evidence="1">
    <location>
        <position position="308"/>
    </location>
    <ligand>
        <name>S-adenosyl-L-methionine</name>
        <dbReference type="ChEBI" id="CHEBI:59789"/>
    </ligand>
</feature>
<feature type="binding site" evidence="1">
    <location>
        <position position="324"/>
    </location>
    <ligand>
        <name>S-adenosyl-L-methionine</name>
        <dbReference type="ChEBI" id="CHEBI:59789"/>
    </ligand>
</feature>
<feature type="binding site" evidence="1">
    <location>
        <position position="351"/>
    </location>
    <ligand>
        <name>S-adenosyl-L-methionine</name>
        <dbReference type="ChEBI" id="CHEBI:59789"/>
    </ligand>
</feature>
<feature type="binding site" evidence="1">
    <location>
        <position position="372"/>
    </location>
    <ligand>
        <name>S-adenosyl-L-methionine</name>
        <dbReference type="ChEBI" id="CHEBI:59789"/>
    </ligand>
</feature>
<sequence>MGRRRRRLPREPFEIAITGLSHEGRGIAHHDERTLFVHGALPGERVRAVYTKRRRSVAEARVVEVVSPAPERIAPHCPHFGVCGGCSLQHLTPERQVELKQSVLMEQFHHMGGVQPERVLAPLTGAPWGYRRKARLAVKHVPRKGGVLVGFREKHSPFVAEMDRCPVLDPRVGERLTELGRLIEGLSIPDRVPQIEVALGDETGALVFRNLAPLTAADLNRLAGFARDSGLAVYQQPGNEATMALVHDPVGRRLDYALPGHGVRLGFRPGDFTQVNAEINRAMVDQALDLLAVEPGQRVLDLFCGLGNFTLPLARRASEVVGVEGAEALVERGRENALRNGLDNVRFYGADLTLAAADQPWATGGFDRVLLDPPRSGAFEVLGLVAALGPKRIVYVSCGPATLARDAGELVHRHGYRLTAAGVMDMFPHTAHVESMAVFQREAQD</sequence>
<gene>
    <name evidence="1" type="primary">rlmD</name>
    <name type="synonym">rumA</name>
    <name type="ordered locus">Mlg_1354</name>
</gene>
<protein>
    <recommendedName>
        <fullName evidence="1">23S rRNA (uracil(1939)-C(5))-methyltransferase RlmD</fullName>
        <ecNumber evidence="1">2.1.1.190</ecNumber>
    </recommendedName>
    <alternativeName>
        <fullName evidence="1">23S rRNA(m5U1939)-methyltransferase</fullName>
    </alternativeName>
</protein>
<name>RLMD_ALKEH</name>
<evidence type="ECO:0000255" key="1">
    <source>
        <dbReference type="HAMAP-Rule" id="MF_01010"/>
    </source>
</evidence>
<reference key="1">
    <citation type="submission" date="2006-08" db="EMBL/GenBank/DDBJ databases">
        <title>Complete sequence of Alkalilimnicola ehrilichei MLHE-1.</title>
        <authorList>
            <person name="Copeland A."/>
            <person name="Lucas S."/>
            <person name="Lapidus A."/>
            <person name="Barry K."/>
            <person name="Detter J.C."/>
            <person name="Glavina del Rio T."/>
            <person name="Hammon N."/>
            <person name="Israni S."/>
            <person name="Dalin E."/>
            <person name="Tice H."/>
            <person name="Pitluck S."/>
            <person name="Sims D."/>
            <person name="Brettin T."/>
            <person name="Bruce D."/>
            <person name="Han C."/>
            <person name="Tapia R."/>
            <person name="Gilna P."/>
            <person name="Schmutz J."/>
            <person name="Larimer F."/>
            <person name="Land M."/>
            <person name="Hauser L."/>
            <person name="Kyrpides N."/>
            <person name="Mikhailova N."/>
            <person name="Oremland R.S."/>
            <person name="Hoeft S.E."/>
            <person name="Switzer-Blum J."/>
            <person name="Kulp T."/>
            <person name="King G."/>
            <person name="Tabita R."/>
            <person name="Witte B."/>
            <person name="Santini J.M."/>
            <person name="Basu P."/>
            <person name="Hollibaugh J.T."/>
            <person name="Xie G."/>
            <person name="Stolz J.F."/>
            <person name="Richardson P."/>
        </authorList>
    </citation>
    <scope>NUCLEOTIDE SEQUENCE [LARGE SCALE GENOMIC DNA]</scope>
    <source>
        <strain>ATCC BAA-1101 / DSM 17681 / MLHE-1</strain>
    </source>
</reference>
<accession>Q0A8Y4</accession>
<keyword id="KW-0004">4Fe-4S</keyword>
<keyword id="KW-0408">Iron</keyword>
<keyword id="KW-0411">Iron-sulfur</keyword>
<keyword id="KW-0479">Metal-binding</keyword>
<keyword id="KW-0489">Methyltransferase</keyword>
<keyword id="KW-1185">Reference proteome</keyword>
<keyword id="KW-0698">rRNA processing</keyword>
<keyword id="KW-0949">S-adenosyl-L-methionine</keyword>
<keyword id="KW-0808">Transferase</keyword>
<comment type="function">
    <text evidence="1">Catalyzes the formation of 5-methyl-uridine at position 1939 (m5U1939) in 23S rRNA.</text>
</comment>
<comment type="catalytic activity">
    <reaction evidence="1">
        <text>uridine(1939) in 23S rRNA + S-adenosyl-L-methionine = 5-methyluridine(1939) in 23S rRNA + S-adenosyl-L-homocysteine + H(+)</text>
        <dbReference type="Rhea" id="RHEA:42908"/>
        <dbReference type="Rhea" id="RHEA-COMP:10278"/>
        <dbReference type="Rhea" id="RHEA-COMP:10279"/>
        <dbReference type="ChEBI" id="CHEBI:15378"/>
        <dbReference type="ChEBI" id="CHEBI:57856"/>
        <dbReference type="ChEBI" id="CHEBI:59789"/>
        <dbReference type="ChEBI" id="CHEBI:65315"/>
        <dbReference type="ChEBI" id="CHEBI:74447"/>
        <dbReference type="EC" id="2.1.1.190"/>
    </reaction>
</comment>
<comment type="similarity">
    <text evidence="1">Belongs to the class I-like SAM-binding methyltransferase superfamily. RNA M5U methyltransferase family. RlmD subfamily.</text>
</comment>
<dbReference type="EC" id="2.1.1.190" evidence="1"/>
<dbReference type="EMBL" id="CP000453">
    <property type="protein sequence ID" value="ABI56703.1"/>
    <property type="molecule type" value="Genomic_DNA"/>
</dbReference>
<dbReference type="RefSeq" id="WP_011629098.1">
    <property type="nucleotide sequence ID" value="NC_008340.1"/>
</dbReference>
<dbReference type="SMR" id="Q0A8Y4"/>
<dbReference type="KEGG" id="aeh:Mlg_1354"/>
<dbReference type="eggNOG" id="COG2265">
    <property type="taxonomic scope" value="Bacteria"/>
</dbReference>
<dbReference type="HOGENOM" id="CLU_014689_8_2_6"/>
<dbReference type="OrthoDB" id="9804590at2"/>
<dbReference type="Proteomes" id="UP000001962">
    <property type="component" value="Chromosome"/>
</dbReference>
<dbReference type="GO" id="GO:0051539">
    <property type="term" value="F:4 iron, 4 sulfur cluster binding"/>
    <property type="evidence" value="ECO:0007669"/>
    <property type="project" value="UniProtKB-KW"/>
</dbReference>
<dbReference type="GO" id="GO:0005506">
    <property type="term" value="F:iron ion binding"/>
    <property type="evidence" value="ECO:0007669"/>
    <property type="project" value="UniProtKB-UniRule"/>
</dbReference>
<dbReference type="GO" id="GO:0003723">
    <property type="term" value="F:RNA binding"/>
    <property type="evidence" value="ECO:0007669"/>
    <property type="project" value="InterPro"/>
</dbReference>
<dbReference type="GO" id="GO:0070041">
    <property type="term" value="F:rRNA (uridine-C5-)-methyltransferase activity"/>
    <property type="evidence" value="ECO:0007669"/>
    <property type="project" value="UniProtKB-UniRule"/>
</dbReference>
<dbReference type="GO" id="GO:0070475">
    <property type="term" value="P:rRNA base methylation"/>
    <property type="evidence" value="ECO:0007669"/>
    <property type="project" value="TreeGrafter"/>
</dbReference>
<dbReference type="CDD" id="cd02440">
    <property type="entry name" value="AdoMet_MTases"/>
    <property type="match status" value="1"/>
</dbReference>
<dbReference type="FunFam" id="3.40.50.150:FF:000009">
    <property type="entry name" value="23S rRNA (Uracil(1939)-C(5))-methyltransferase RlmD"/>
    <property type="match status" value="1"/>
</dbReference>
<dbReference type="FunFam" id="2.40.50.140:FF:000097">
    <property type="entry name" value="23S rRNA (uracil(1939)-C(5))-methyltransferase RlmD"/>
    <property type="match status" value="1"/>
</dbReference>
<dbReference type="Gene3D" id="2.40.50.1070">
    <property type="match status" value="1"/>
</dbReference>
<dbReference type="Gene3D" id="2.40.50.140">
    <property type="entry name" value="Nucleic acid-binding proteins"/>
    <property type="match status" value="1"/>
</dbReference>
<dbReference type="Gene3D" id="3.40.50.150">
    <property type="entry name" value="Vaccinia Virus protein VP39"/>
    <property type="match status" value="1"/>
</dbReference>
<dbReference type="HAMAP" id="MF_01010">
    <property type="entry name" value="23SrRNA_methyltr_RlmD"/>
    <property type="match status" value="1"/>
</dbReference>
<dbReference type="InterPro" id="IPR001566">
    <property type="entry name" value="23S_rRNA_MeTrfase_RlmD"/>
</dbReference>
<dbReference type="InterPro" id="IPR030390">
    <property type="entry name" value="MeTrfase_TrmA_AS"/>
</dbReference>
<dbReference type="InterPro" id="IPR030391">
    <property type="entry name" value="MeTrfase_TrmA_CS"/>
</dbReference>
<dbReference type="InterPro" id="IPR012340">
    <property type="entry name" value="NA-bd_OB-fold"/>
</dbReference>
<dbReference type="InterPro" id="IPR029063">
    <property type="entry name" value="SAM-dependent_MTases_sf"/>
</dbReference>
<dbReference type="InterPro" id="IPR002792">
    <property type="entry name" value="TRAM_dom"/>
</dbReference>
<dbReference type="InterPro" id="IPR010280">
    <property type="entry name" value="U5_MeTrfase_fam"/>
</dbReference>
<dbReference type="NCBIfam" id="NF009639">
    <property type="entry name" value="PRK13168.1"/>
    <property type="match status" value="1"/>
</dbReference>
<dbReference type="NCBIfam" id="TIGR00479">
    <property type="entry name" value="rumA"/>
    <property type="match status" value="1"/>
</dbReference>
<dbReference type="PANTHER" id="PTHR11061:SF49">
    <property type="entry name" value="23S RRNA (URACIL(1939)-C(5))-METHYLTRANSFERASE RLMD"/>
    <property type="match status" value="1"/>
</dbReference>
<dbReference type="PANTHER" id="PTHR11061">
    <property type="entry name" value="RNA M5U METHYLTRANSFERASE"/>
    <property type="match status" value="1"/>
</dbReference>
<dbReference type="Pfam" id="PF01938">
    <property type="entry name" value="TRAM"/>
    <property type="match status" value="1"/>
</dbReference>
<dbReference type="Pfam" id="PF05958">
    <property type="entry name" value="tRNA_U5-meth_tr"/>
    <property type="match status" value="1"/>
</dbReference>
<dbReference type="SUPFAM" id="SSF50249">
    <property type="entry name" value="Nucleic acid-binding proteins"/>
    <property type="match status" value="1"/>
</dbReference>
<dbReference type="SUPFAM" id="SSF53335">
    <property type="entry name" value="S-adenosyl-L-methionine-dependent methyltransferases"/>
    <property type="match status" value="1"/>
</dbReference>
<dbReference type="PROSITE" id="PS51687">
    <property type="entry name" value="SAM_MT_RNA_M5U"/>
    <property type="match status" value="1"/>
</dbReference>
<dbReference type="PROSITE" id="PS50926">
    <property type="entry name" value="TRAM"/>
    <property type="match status" value="1"/>
</dbReference>
<dbReference type="PROSITE" id="PS01230">
    <property type="entry name" value="TRMA_1"/>
    <property type="match status" value="1"/>
</dbReference>
<dbReference type="PROSITE" id="PS01231">
    <property type="entry name" value="TRMA_2"/>
    <property type="match status" value="1"/>
</dbReference>
<proteinExistence type="inferred from homology"/>
<organism>
    <name type="scientific">Alkalilimnicola ehrlichii (strain ATCC BAA-1101 / DSM 17681 / MLHE-1)</name>
    <dbReference type="NCBI Taxonomy" id="187272"/>
    <lineage>
        <taxon>Bacteria</taxon>
        <taxon>Pseudomonadati</taxon>
        <taxon>Pseudomonadota</taxon>
        <taxon>Gammaproteobacteria</taxon>
        <taxon>Chromatiales</taxon>
        <taxon>Ectothiorhodospiraceae</taxon>
        <taxon>Alkalilimnicola</taxon>
    </lineage>
</organism>